<comment type="function">
    <text evidence="3">Catalyzes the sequential condensation of isopentenyl pyrophosphate (IPP) with the allylic pyrophosphates, dimethylallyl pyrophosphate (DMAPP), and then with the resultant geranylpyrophosphate (GPP) to the ultimate product farnesyl pyrophosphate (FPP). Has a 4.5 time greater affinity for GPP versus DMAPP.</text>
</comment>
<comment type="catalytic activity">
    <reaction>
        <text>isopentenyl diphosphate + (2E)-geranyl diphosphate = (2E,6E)-farnesyl diphosphate + diphosphate</text>
        <dbReference type="Rhea" id="RHEA:19361"/>
        <dbReference type="ChEBI" id="CHEBI:33019"/>
        <dbReference type="ChEBI" id="CHEBI:58057"/>
        <dbReference type="ChEBI" id="CHEBI:128769"/>
        <dbReference type="ChEBI" id="CHEBI:175763"/>
        <dbReference type="EC" id="2.5.1.10"/>
    </reaction>
</comment>
<comment type="catalytic activity">
    <reaction>
        <text>isopentenyl diphosphate + dimethylallyl diphosphate = (2E)-geranyl diphosphate + diphosphate</text>
        <dbReference type="Rhea" id="RHEA:22408"/>
        <dbReference type="ChEBI" id="CHEBI:33019"/>
        <dbReference type="ChEBI" id="CHEBI:57623"/>
        <dbReference type="ChEBI" id="CHEBI:58057"/>
        <dbReference type="ChEBI" id="CHEBI:128769"/>
        <dbReference type="EC" id="2.5.1.1"/>
    </reaction>
</comment>
<comment type="cofactor">
    <cofactor evidence="3">
        <name>Mg(2+)</name>
        <dbReference type="ChEBI" id="CHEBI:18420"/>
    </cofactor>
    <cofactor evidence="3">
        <name>Mn(2+)</name>
        <dbReference type="ChEBI" id="CHEBI:29035"/>
    </cofactor>
    <text evidence="3">Binds Mg(2+) or Mn(2+). Maximal rates of activity with 1 to 4 mM Mg(2+) and only one third of activity with Mn(2+). No activity with Zn(2+) or Ca(2+).</text>
</comment>
<comment type="biophysicochemical properties">
    <kinetics>
        <KM evidence="3">7.1 uM for dimethylallyl diphosphate</KM>
        <KM evidence="3">1.6 uM for geranyl diphosphate</KM>
        <KM evidence="3">5.5 uM for isopentenyl pyrophosphate</KM>
    </kinetics>
    <phDependence>
        <text evidence="3">Optimum pH is 6.5.</text>
    </phDependence>
    <temperatureDependence>
        <text evidence="3">Optimum temperature is 40 degrees Celsius.</text>
    </temperatureDependence>
</comment>
<comment type="pathway">
    <text>Isoprenoid biosynthesis; farnesyl diphosphate biosynthesis; farnesyl diphosphate from geranyl diphosphate and isopentenyl diphosphate: step 1/1.</text>
</comment>
<comment type="pathway">
    <text>Isoprenoid biosynthesis; geranyl diphosphate biosynthesis; geranyl diphosphate from dimethylallyl diphosphate and isopentenyl diphosphate: step 1/1.</text>
</comment>
<comment type="tissue specificity">
    <text evidence="3">Highly expressed in shoots.</text>
</comment>
<comment type="domain">
    <text evidence="1">The Asp-Asp-Xaa-Xaa-Asp/Glu (DDXXD/E) motif is important for the catalytic activity, presumably through binding to Mg(2+).</text>
</comment>
<comment type="similarity">
    <text evidence="4">Belongs to the FPP/GGPP synthase family.</text>
</comment>
<dbReference type="EC" id="2.5.1.1"/>
<dbReference type="EC" id="2.5.1.10"/>
<dbReference type="EMBL" id="AY308477">
    <property type="protein sequence ID" value="AAP74720.1"/>
    <property type="molecule type" value="mRNA"/>
</dbReference>
<dbReference type="PDB" id="4KK2">
    <property type="method" value="X-ray"/>
    <property type="resolution" value="2.20 A"/>
    <property type="chains" value="A/B=73-346"/>
</dbReference>
<dbReference type="PDBsum" id="4KK2"/>
<dbReference type="SMR" id="Q7XYS9"/>
<dbReference type="BRENDA" id="2.5.1.10">
    <property type="organism ID" value="8609"/>
</dbReference>
<dbReference type="SABIO-RK" id="Q7XYS9"/>
<dbReference type="UniPathway" id="UPA00259">
    <property type="reaction ID" value="UER00368"/>
</dbReference>
<dbReference type="UniPathway" id="UPA00260">
    <property type="reaction ID" value="UER00369"/>
</dbReference>
<dbReference type="EvolutionaryTrace" id="Q7XYS9"/>
<dbReference type="GO" id="GO:0005737">
    <property type="term" value="C:cytoplasm"/>
    <property type="evidence" value="ECO:0007669"/>
    <property type="project" value="TreeGrafter"/>
</dbReference>
<dbReference type="GO" id="GO:0004337">
    <property type="term" value="F:(2E,6E)-farnesyl diphosphate synthase activity"/>
    <property type="evidence" value="ECO:0007669"/>
    <property type="project" value="UniProtKB-EC"/>
</dbReference>
<dbReference type="GO" id="GO:0004161">
    <property type="term" value="F:dimethylallyltranstransferase activity"/>
    <property type="evidence" value="ECO:0007669"/>
    <property type="project" value="UniProtKB-EC"/>
</dbReference>
<dbReference type="GO" id="GO:0046872">
    <property type="term" value="F:metal ion binding"/>
    <property type="evidence" value="ECO:0007669"/>
    <property type="project" value="UniProtKB-KW"/>
</dbReference>
<dbReference type="GO" id="GO:0045337">
    <property type="term" value="P:farnesyl diphosphate biosynthetic process"/>
    <property type="evidence" value="ECO:0007669"/>
    <property type="project" value="UniProtKB-UniPathway"/>
</dbReference>
<dbReference type="GO" id="GO:0033384">
    <property type="term" value="P:geranyl diphosphate biosynthetic process"/>
    <property type="evidence" value="ECO:0007669"/>
    <property type="project" value="UniProtKB-UniPathway"/>
</dbReference>
<dbReference type="CDD" id="cd00685">
    <property type="entry name" value="Trans_IPPS_HT"/>
    <property type="match status" value="1"/>
</dbReference>
<dbReference type="FunFam" id="1.10.600.10:FF:000008">
    <property type="entry name" value="Farnesyl pyrophosphate synthase"/>
    <property type="match status" value="1"/>
</dbReference>
<dbReference type="Gene3D" id="1.10.600.10">
    <property type="entry name" value="Farnesyl Diphosphate Synthase"/>
    <property type="match status" value="1"/>
</dbReference>
<dbReference type="InterPro" id="IPR039702">
    <property type="entry name" value="FPS1-like"/>
</dbReference>
<dbReference type="InterPro" id="IPR008949">
    <property type="entry name" value="Isoprenoid_synthase_dom_sf"/>
</dbReference>
<dbReference type="InterPro" id="IPR000092">
    <property type="entry name" value="Polyprenyl_synt"/>
</dbReference>
<dbReference type="InterPro" id="IPR033749">
    <property type="entry name" value="Polyprenyl_synt_CS"/>
</dbReference>
<dbReference type="PANTHER" id="PTHR11525:SF0">
    <property type="entry name" value="FARNESYL PYROPHOSPHATE SYNTHASE"/>
    <property type="match status" value="1"/>
</dbReference>
<dbReference type="PANTHER" id="PTHR11525">
    <property type="entry name" value="FARNESYL-PYROPHOSPHATE SYNTHETASE"/>
    <property type="match status" value="1"/>
</dbReference>
<dbReference type="Pfam" id="PF00348">
    <property type="entry name" value="polyprenyl_synt"/>
    <property type="match status" value="1"/>
</dbReference>
<dbReference type="SFLD" id="SFLDS00005">
    <property type="entry name" value="Isoprenoid_Synthase_Type_I"/>
    <property type="match status" value="1"/>
</dbReference>
<dbReference type="SFLD" id="SFLDG01017">
    <property type="entry name" value="Polyprenyl_Transferase_Like"/>
    <property type="match status" value="1"/>
</dbReference>
<dbReference type="SUPFAM" id="SSF48576">
    <property type="entry name" value="Terpenoid synthases"/>
    <property type="match status" value="1"/>
</dbReference>
<dbReference type="PROSITE" id="PS00723">
    <property type="entry name" value="POLYPRENYL_SYNTHASE_1"/>
    <property type="match status" value="1"/>
</dbReference>
<dbReference type="PROSITE" id="PS00444">
    <property type="entry name" value="POLYPRENYL_SYNTHASE_2"/>
    <property type="match status" value="1"/>
</dbReference>
<name>FPPS1_ARTSI</name>
<evidence type="ECO:0000250" key="1"/>
<evidence type="ECO:0000250" key="2">
    <source>
        <dbReference type="UniProtKB" id="P14324"/>
    </source>
</evidence>
<evidence type="ECO:0000269" key="3">
    <source>
    </source>
</evidence>
<evidence type="ECO:0000305" key="4"/>
<evidence type="ECO:0007829" key="5">
    <source>
        <dbReference type="PDB" id="4KK2"/>
    </source>
</evidence>
<gene>
    <name type="primary">FDS-1</name>
</gene>
<sequence length="346" mass="39694">MSSSKSIDLKSKFLKVYDTLKSDLINDPAFEFDDDSRQWIQKMLDYNVPGGKLNRGLSVVDSYQLLKGGELSDDEIFLSSALGWCIEWLQAYFLVLDDIMDESHTRRGQPCWFRLPKVGMIAANDGILLRNHVPRILKKHFRGKPYYVDLVDLFNEVEFQTASGQMIDLITTLVGEKDLSKYSLSIHRRIVQYKTAYYSFYLPVACALLMFGEDLDKHVEVKNVLVEMGTYFQVQDDYLDCFGAPEVIGKIGTDIEDFKCSWLVVKALELANEEQKKTLHENYGKKDPASVAKVKEVYHTLNLQAVFEDYEATSYKKLITSIENHPSKAVQAVLKSFLGKIYKRQK</sequence>
<keyword id="KW-0002">3D-structure</keyword>
<keyword id="KW-0414">Isoprene biosynthesis</keyword>
<keyword id="KW-0460">Magnesium</keyword>
<keyword id="KW-0479">Metal-binding</keyword>
<keyword id="KW-0808">Transferase</keyword>
<proteinExistence type="evidence at protein level"/>
<accession>Q7XYS9</accession>
<feature type="chain" id="PRO_0000405123" description="Farnesyl diphosphate synthase 1">
    <location>
        <begin position="1"/>
        <end position="346"/>
    </location>
</feature>
<feature type="short sequence motif" description="DDXXD motif" evidence="4">
    <location>
        <begin position="97"/>
        <end position="101"/>
    </location>
</feature>
<feature type="short sequence motif" description="DDXXD motif" evidence="4">
    <location>
        <begin position="236"/>
        <end position="240"/>
    </location>
</feature>
<feature type="binding site" evidence="2">
    <location>
        <position position="52"/>
    </location>
    <ligand>
        <name>isopentenyl diphosphate</name>
        <dbReference type="ChEBI" id="CHEBI:128769"/>
    </ligand>
</feature>
<feature type="binding site" evidence="2">
    <location>
        <position position="55"/>
    </location>
    <ligand>
        <name>isopentenyl diphosphate</name>
        <dbReference type="ChEBI" id="CHEBI:128769"/>
    </ligand>
</feature>
<feature type="binding site" evidence="2">
    <location>
        <position position="90"/>
    </location>
    <ligand>
        <name>isopentenyl diphosphate</name>
        <dbReference type="ChEBI" id="CHEBI:128769"/>
    </ligand>
</feature>
<feature type="binding site" evidence="2">
    <location>
        <position position="97"/>
    </location>
    <ligand>
        <name>Mg(2+)</name>
        <dbReference type="ChEBI" id="CHEBI:18420"/>
        <label>1</label>
    </ligand>
</feature>
<feature type="binding site" evidence="2">
    <location>
        <position position="97"/>
    </location>
    <ligand>
        <name>Mg(2+)</name>
        <dbReference type="ChEBI" id="CHEBI:18420"/>
        <label>2</label>
    </ligand>
</feature>
<feature type="binding site" evidence="2">
    <location>
        <position position="101"/>
    </location>
    <ligand>
        <name>Mg(2+)</name>
        <dbReference type="ChEBI" id="CHEBI:18420"/>
        <label>1</label>
    </ligand>
</feature>
<feature type="binding site" evidence="2">
    <location>
        <position position="101"/>
    </location>
    <ligand>
        <name>Mg(2+)</name>
        <dbReference type="ChEBI" id="CHEBI:18420"/>
        <label>2</label>
    </ligand>
</feature>
<feature type="binding site" evidence="1">
    <location>
        <position position="106"/>
    </location>
    <ligand>
        <name>dimethylallyl diphosphate</name>
        <dbReference type="ChEBI" id="CHEBI:57623"/>
    </ligand>
</feature>
<feature type="binding site" evidence="2">
    <location>
        <position position="107"/>
    </location>
    <ligand>
        <name>isopentenyl diphosphate</name>
        <dbReference type="ChEBI" id="CHEBI:128769"/>
    </ligand>
</feature>
<feature type="binding site" evidence="1">
    <location>
        <position position="194"/>
    </location>
    <ligand>
        <name>dimethylallyl diphosphate</name>
        <dbReference type="ChEBI" id="CHEBI:57623"/>
    </ligand>
</feature>
<feature type="binding site" evidence="1">
    <location>
        <position position="195"/>
    </location>
    <ligand>
        <name>dimethylallyl diphosphate</name>
        <dbReference type="ChEBI" id="CHEBI:57623"/>
    </ligand>
</feature>
<feature type="binding site" evidence="1">
    <location>
        <position position="233"/>
    </location>
    <ligand>
        <name>dimethylallyl diphosphate</name>
        <dbReference type="ChEBI" id="CHEBI:57623"/>
    </ligand>
</feature>
<feature type="binding site" evidence="1">
    <location>
        <position position="250"/>
    </location>
    <ligand>
        <name>dimethylallyl diphosphate</name>
        <dbReference type="ChEBI" id="CHEBI:57623"/>
    </ligand>
</feature>
<feature type="binding site" evidence="1">
    <location>
        <position position="259"/>
    </location>
    <ligand>
        <name>dimethylallyl diphosphate</name>
        <dbReference type="ChEBI" id="CHEBI:57623"/>
    </ligand>
</feature>
<feature type="helix" evidence="5">
    <location>
        <begin position="73"/>
        <end position="100"/>
    </location>
</feature>
<feature type="helix" evidence="5">
    <location>
        <begin position="112"/>
        <end position="114"/>
    </location>
</feature>
<feature type="turn" evidence="5">
    <location>
        <begin position="116"/>
        <end position="120"/>
    </location>
</feature>
<feature type="helix" evidence="5">
    <location>
        <begin position="121"/>
        <end position="141"/>
    </location>
</feature>
<feature type="helix" evidence="5">
    <location>
        <begin position="147"/>
        <end position="172"/>
    </location>
</feature>
<feature type="helix" evidence="5">
    <location>
        <begin position="179"/>
        <end position="181"/>
    </location>
</feature>
<feature type="helix" evidence="5">
    <location>
        <begin position="184"/>
        <end position="194"/>
    </location>
</feature>
<feature type="helix" evidence="5">
    <location>
        <begin position="196"/>
        <end position="199"/>
    </location>
</feature>
<feature type="helix" evidence="5">
    <location>
        <begin position="201"/>
        <end position="211"/>
    </location>
</feature>
<feature type="helix" evidence="5">
    <location>
        <begin position="215"/>
        <end position="217"/>
    </location>
</feature>
<feature type="helix" evidence="5">
    <location>
        <begin position="219"/>
        <end position="242"/>
    </location>
</feature>
<feature type="helix" evidence="5">
    <location>
        <begin position="245"/>
        <end position="248"/>
    </location>
</feature>
<feature type="turn" evidence="5">
    <location>
        <begin position="254"/>
        <end position="258"/>
    </location>
</feature>
<feature type="helix" evidence="5">
    <location>
        <begin position="262"/>
        <end position="270"/>
    </location>
</feature>
<feature type="helix" evidence="5">
    <location>
        <begin position="273"/>
        <end position="282"/>
    </location>
</feature>
<feature type="helix" evidence="5">
    <location>
        <begin position="288"/>
        <end position="300"/>
    </location>
</feature>
<feature type="helix" evidence="5">
    <location>
        <begin position="303"/>
        <end position="323"/>
    </location>
</feature>
<feature type="helix" evidence="5">
    <location>
        <begin position="328"/>
        <end position="341"/>
    </location>
</feature>
<organism>
    <name type="scientific">Artemisia spiciformis</name>
    <name type="common">Spiked big sagebrush</name>
    <name type="synonym">Artemisia tridentata spiciformis</name>
    <dbReference type="NCBI Taxonomy" id="235357"/>
    <lineage>
        <taxon>Eukaryota</taxon>
        <taxon>Viridiplantae</taxon>
        <taxon>Streptophyta</taxon>
        <taxon>Embryophyta</taxon>
        <taxon>Tracheophyta</taxon>
        <taxon>Spermatophyta</taxon>
        <taxon>Magnoliopsida</taxon>
        <taxon>eudicotyledons</taxon>
        <taxon>Gunneridae</taxon>
        <taxon>Pentapetalae</taxon>
        <taxon>asterids</taxon>
        <taxon>campanulids</taxon>
        <taxon>Asterales</taxon>
        <taxon>Asteraceae</taxon>
        <taxon>Asteroideae</taxon>
        <taxon>Anthemideae</taxon>
        <taxon>Artemisiinae</taxon>
        <taxon>Artemisia</taxon>
    </lineage>
</organism>
<protein>
    <recommendedName>
        <fullName>Farnesyl diphosphate synthase 1</fullName>
    </recommendedName>
    <domain>
        <recommendedName>
            <fullName>Dimethylallyltranstransferase</fullName>
            <ecNumber>2.5.1.1</ecNumber>
        </recommendedName>
    </domain>
    <domain>
        <recommendedName>
            <fullName>(2E,6E)-farnesyl diphosphate synthase</fullName>
            <ecNumber>2.5.1.10</ecNumber>
        </recommendedName>
    </domain>
</protein>
<reference key="1">
    <citation type="journal article" date="2003" name="J. Biol. Chem.">
        <title>Enzymes encoded by the farnesyl diphosphate synthase gene family in the Big Sagebrush Artemisia tridentata ssp. spiciformis.</title>
        <authorList>
            <person name="Hemmerlin A."/>
            <person name="Rivera S.B."/>
            <person name="Erickson H.K."/>
            <person name="Poulter C.D."/>
        </authorList>
    </citation>
    <scope>NUCLEOTIDE SEQUENCE [MRNA]</scope>
    <scope>CATALYTIC ACTIVITY</scope>
    <scope>BIOPHYSICOCHEMICAL PROPERTIES</scope>
    <scope>COFACTOR</scope>
    <scope>TISSUE SPECIFICITY</scope>
    <scope>FUNCTION</scope>
</reference>
<reference key="2">
    <citation type="journal article" date="2003" name="J. Am. Chem. Soc.">
        <title>Chrysanthemyl diphosphate synthase. The relationship among chain elongation, branching, and cyclopropanation reactions in the isoprenoid biosynthetic pathway.</title>
        <authorList>
            <person name="Erickson H.K."/>
            <person name="Poulter C.D."/>
        </authorList>
    </citation>
    <scope>CATALYTIC ACTIVITY</scope>
</reference>